<gene>
    <name evidence="1" type="primary">purA</name>
    <name type="ordered locus">Ping_3234</name>
</gene>
<keyword id="KW-0963">Cytoplasm</keyword>
<keyword id="KW-0342">GTP-binding</keyword>
<keyword id="KW-0436">Ligase</keyword>
<keyword id="KW-0460">Magnesium</keyword>
<keyword id="KW-0479">Metal-binding</keyword>
<keyword id="KW-0547">Nucleotide-binding</keyword>
<keyword id="KW-0658">Purine biosynthesis</keyword>
<keyword id="KW-1185">Reference proteome</keyword>
<reference key="1">
    <citation type="journal article" date="2008" name="BMC Genomics">
        <title>Genomics of an extreme psychrophile, Psychromonas ingrahamii.</title>
        <authorList>
            <person name="Riley M."/>
            <person name="Staley J.T."/>
            <person name="Danchin A."/>
            <person name="Wang T.Z."/>
            <person name="Brettin T.S."/>
            <person name="Hauser L.J."/>
            <person name="Land M.L."/>
            <person name="Thompson L.S."/>
        </authorList>
    </citation>
    <scope>NUCLEOTIDE SEQUENCE [LARGE SCALE GENOMIC DNA]</scope>
    <source>
        <strain>DSM 17664 / CCUG 51855 / 37</strain>
    </source>
</reference>
<name>PURA_PSYIN</name>
<proteinExistence type="inferred from homology"/>
<organism>
    <name type="scientific">Psychromonas ingrahamii (strain DSM 17664 / CCUG 51855 / 37)</name>
    <dbReference type="NCBI Taxonomy" id="357804"/>
    <lineage>
        <taxon>Bacteria</taxon>
        <taxon>Pseudomonadati</taxon>
        <taxon>Pseudomonadota</taxon>
        <taxon>Gammaproteobacteria</taxon>
        <taxon>Alteromonadales</taxon>
        <taxon>Psychromonadaceae</taxon>
        <taxon>Psychromonas</taxon>
    </lineage>
</organism>
<dbReference type="EC" id="6.3.4.4" evidence="1"/>
<dbReference type="EMBL" id="CP000510">
    <property type="protein sequence ID" value="ABM04921.1"/>
    <property type="molecule type" value="Genomic_DNA"/>
</dbReference>
<dbReference type="RefSeq" id="WP_011771473.1">
    <property type="nucleotide sequence ID" value="NC_008709.1"/>
</dbReference>
<dbReference type="SMR" id="A1SZK6"/>
<dbReference type="STRING" id="357804.Ping_3234"/>
<dbReference type="KEGG" id="pin:Ping_3234"/>
<dbReference type="eggNOG" id="COG0104">
    <property type="taxonomic scope" value="Bacteria"/>
</dbReference>
<dbReference type="HOGENOM" id="CLU_029848_0_0_6"/>
<dbReference type="OrthoDB" id="9807553at2"/>
<dbReference type="UniPathway" id="UPA00075">
    <property type="reaction ID" value="UER00335"/>
</dbReference>
<dbReference type="Proteomes" id="UP000000639">
    <property type="component" value="Chromosome"/>
</dbReference>
<dbReference type="GO" id="GO:0005737">
    <property type="term" value="C:cytoplasm"/>
    <property type="evidence" value="ECO:0007669"/>
    <property type="project" value="UniProtKB-SubCell"/>
</dbReference>
<dbReference type="GO" id="GO:0004019">
    <property type="term" value="F:adenylosuccinate synthase activity"/>
    <property type="evidence" value="ECO:0007669"/>
    <property type="project" value="UniProtKB-UniRule"/>
</dbReference>
<dbReference type="GO" id="GO:0005525">
    <property type="term" value="F:GTP binding"/>
    <property type="evidence" value="ECO:0007669"/>
    <property type="project" value="UniProtKB-UniRule"/>
</dbReference>
<dbReference type="GO" id="GO:0000287">
    <property type="term" value="F:magnesium ion binding"/>
    <property type="evidence" value="ECO:0007669"/>
    <property type="project" value="UniProtKB-UniRule"/>
</dbReference>
<dbReference type="GO" id="GO:0044208">
    <property type="term" value="P:'de novo' AMP biosynthetic process"/>
    <property type="evidence" value="ECO:0007669"/>
    <property type="project" value="UniProtKB-UniRule"/>
</dbReference>
<dbReference type="GO" id="GO:0046040">
    <property type="term" value="P:IMP metabolic process"/>
    <property type="evidence" value="ECO:0007669"/>
    <property type="project" value="TreeGrafter"/>
</dbReference>
<dbReference type="CDD" id="cd03108">
    <property type="entry name" value="AdSS"/>
    <property type="match status" value="1"/>
</dbReference>
<dbReference type="FunFam" id="1.10.300.10:FF:000001">
    <property type="entry name" value="Adenylosuccinate synthetase"/>
    <property type="match status" value="1"/>
</dbReference>
<dbReference type="FunFam" id="3.90.170.10:FF:000001">
    <property type="entry name" value="Adenylosuccinate synthetase"/>
    <property type="match status" value="1"/>
</dbReference>
<dbReference type="Gene3D" id="3.40.440.10">
    <property type="entry name" value="Adenylosuccinate Synthetase, subunit A, domain 1"/>
    <property type="match status" value="1"/>
</dbReference>
<dbReference type="Gene3D" id="1.10.300.10">
    <property type="entry name" value="Adenylosuccinate Synthetase, subunit A, domain 2"/>
    <property type="match status" value="1"/>
</dbReference>
<dbReference type="Gene3D" id="3.90.170.10">
    <property type="entry name" value="Adenylosuccinate Synthetase, subunit A, domain 3"/>
    <property type="match status" value="1"/>
</dbReference>
<dbReference type="HAMAP" id="MF_00011">
    <property type="entry name" value="Adenylosucc_synth"/>
    <property type="match status" value="1"/>
</dbReference>
<dbReference type="InterPro" id="IPR018220">
    <property type="entry name" value="Adenylosuccin_syn_GTP-bd"/>
</dbReference>
<dbReference type="InterPro" id="IPR033128">
    <property type="entry name" value="Adenylosuccin_syn_Lys_AS"/>
</dbReference>
<dbReference type="InterPro" id="IPR042109">
    <property type="entry name" value="Adenylosuccinate_synth_dom1"/>
</dbReference>
<dbReference type="InterPro" id="IPR042110">
    <property type="entry name" value="Adenylosuccinate_synth_dom2"/>
</dbReference>
<dbReference type="InterPro" id="IPR042111">
    <property type="entry name" value="Adenylosuccinate_synth_dom3"/>
</dbReference>
<dbReference type="InterPro" id="IPR001114">
    <property type="entry name" value="Adenylosuccinate_synthetase"/>
</dbReference>
<dbReference type="InterPro" id="IPR027417">
    <property type="entry name" value="P-loop_NTPase"/>
</dbReference>
<dbReference type="NCBIfam" id="NF002223">
    <property type="entry name" value="PRK01117.1"/>
    <property type="match status" value="1"/>
</dbReference>
<dbReference type="NCBIfam" id="TIGR00184">
    <property type="entry name" value="purA"/>
    <property type="match status" value="1"/>
</dbReference>
<dbReference type="PANTHER" id="PTHR11846">
    <property type="entry name" value="ADENYLOSUCCINATE SYNTHETASE"/>
    <property type="match status" value="1"/>
</dbReference>
<dbReference type="PANTHER" id="PTHR11846:SF0">
    <property type="entry name" value="ADENYLOSUCCINATE SYNTHETASE"/>
    <property type="match status" value="1"/>
</dbReference>
<dbReference type="Pfam" id="PF00709">
    <property type="entry name" value="Adenylsucc_synt"/>
    <property type="match status" value="1"/>
</dbReference>
<dbReference type="SMART" id="SM00788">
    <property type="entry name" value="Adenylsucc_synt"/>
    <property type="match status" value="1"/>
</dbReference>
<dbReference type="SUPFAM" id="SSF52540">
    <property type="entry name" value="P-loop containing nucleoside triphosphate hydrolases"/>
    <property type="match status" value="1"/>
</dbReference>
<dbReference type="PROSITE" id="PS01266">
    <property type="entry name" value="ADENYLOSUCCIN_SYN_1"/>
    <property type="match status" value="1"/>
</dbReference>
<dbReference type="PROSITE" id="PS00513">
    <property type="entry name" value="ADENYLOSUCCIN_SYN_2"/>
    <property type="match status" value="1"/>
</dbReference>
<sequence>MGNNVVVLGTQWGDEGKGKVVDLLTDKAQWVVRYQGGHNAGHTLVIDGEKTVLHLIPSGILRDNVKCVIGNGVVLSPEALLEELKMLEDRGVPAKERLHISEGCPLILPYHIALDAARELARGDKAIGTTGRGIGPAYEDKVARRGLRVDDLFNMETFAVKLKEVIDYHNFQLVNYYKVEAVNFDEVLKQVQSVADLLISLVIDVTDELDKARLRGENILFEGAQGTLLDIDHGTYPYVTSSNTTAGGVATGSGFGPAHIDYVLGIVKAYTTRVGSGPFPTELYDGVDKLDPAGKHLGTVGHEFGATTGRLRRTGWFDAVAIKRAVQLNSITGFCLTKLDVLDGLEEIKICTAYKMPGDKLVDVPPMSAEGYEQAVPVYETVPGWTESSFGVTSFDALPKNAQAYVRRLEEITGIPMDIISTGPDRNETMIQVNPFN</sequence>
<feature type="chain" id="PRO_1000000900" description="Adenylosuccinate synthetase">
    <location>
        <begin position="1"/>
        <end position="437"/>
    </location>
</feature>
<feature type="active site" description="Proton acceptor" evidence="1">
    <location>
        <position position="14"/>
    </location>
</feature>
<feature type="active site" description="Proton donor" evidence="1">
    <location>
        <position position="42"/>
    </location>
</feature>
<feature type="binding site" evidence="1">
    <location>
        <begin position="13"/>
        <end position="19"/>
    </location>
    <ligand>
        <name>GTP</name>
        <dbReference type="ChEBI" id="CHEBI:37565"/>
    </ligand>
</feature>
<feature type="binding site" description="in other chain" evidence="1">
    <location>
        <begin position="14"/>
        <end position="17"/>
    </location>
    <ligand>
        <name>IMP</name>
        <dbReference type="ChEBI" id="CHEBI:58053"/>
        <note>ligand shared between dimeric partners</note>
    </ligand>
</feature>
<feature type="binding site" evidence="1">
    <location>
        <position position="14"/>
    </location>
    <ligand>
        <name>Mg(2+)</name>
        <dbReference type="ChEBI" id="CHEBI:18420"/>
    </ligand>
</feature>
<feature type="binding site" description="in other chain" evidence="1">
    <location>
        <begin position="39"/>
        <end position="42"/>
    </location>
    <ligand>
        <name>IMP</name>
        <dbReference type="ChEBI" id="CHEBI:58053"/>
        <note>ligand shared between dimeric partners</note>
    </ligand>
</feature>
<feature type="binding site" evidence="1">
    <location>
        <begin position="41"/>
        <end position="43"/>
    </location>
    <ligand>
        <name>GTP</name>
        <dbReference type="ChEBI" id="CHEBI:37565"/>
    </ligand>
</feature>
<feature type="binding site" evidence="1">
    <location>
        <position position="41"/>
    </location>
    <ligand>
        <name>Mg(2+)</name>
        <dbReference type="ChEBI" id="CHEBI:18420"/>
    </ligand>
</feature>
<feature type="binding site" description="in other chain" evidence="1">
    <location>
        <position position="130"/>
    </location>
    <ligand>
        <name>IMP</name>
        <dbReference type="ChEBI" id="CHEBI:58053"/>
        <note>ligand shared between dimeric partners</note>
    </ligand>
</feature>
<feature type="binding site" evidence="1">
    <location>
        <position position="144"/>
    </location>
    <ligand>
        <name>IMP</name>
        <dbReference type="ChEBI" id="CHEBI:58053"/>
        <note>ligand shared between dimeric partners</note>
    </ligand>
</feature>
<feature type="binding site" description="in other chain" evidence="1">
    <location>
        <position position="225"/>
    </location>
    <ligand>
        <name>IMP</name>
        <dbReference type="ChEBI" id="CHEBI:58053"/>
        <note>ligand shared between dimeric partners</note>
    </ligand>
</feature>
<feature type="binding site" description="in other chain" evidence="1">
    <location>
        <position position="240"/>
    </location>
    <ligand>
        <name>IMP</name>
        <dbReference type="ChEBI" id="CHEBI:58053"/>
        <note>ligand shared between dimeric partners</note>
    </ligand>
</feature>
<feature type="binding site" evidence="1">
    <location>
        <begin position="306"/>
        <end position="312"/>
    </location>
    <ligand>
        <name>substrate</name>
    </ligand>
</feature>
<feature type="binding site" description="in other chain" evidence="1">
    <location>
        <position position="310"/>
    </location>
    <ligand>
        <name>IMP</name>
        <dbReference type="ChEBI" id="CHEBI:58053"/>
        <note>ligand shared between dimeric partners</note>
    </ligand>
</feature>
<feature type="binding site" evidence="1">
    <location>
        <position position="312"/>
    </location>
    <ligand>
        <name>GTP</name>
        <dbReference type="ChEBI" id="CHEBI:37565"/>
    </ligand>
</feature>
<feature type="binding site" evidence="1">
    <location>
        <begin position="338"/>
        <end position="340"/>
    </location>
    <ligand>
        <name>GTP</name>
        <dbReference type="ChEBI" id="CHEBI:37565"/>
    </ligand>
</feature>
<feature type="binding site" evidence="1">
    <location>
        <begin position="421"/>
        <end position="423"/>
    </location>
    <ligand>
        <name>GTP</name>
        <dbReference type="ChEBI" id="CHEBI:37565"/>
    </ligand>
</feature>
<accession>A1SZK6</accession>
<protein>
    <recommendedName>
        <fullName evidence="1">Adenylosuccinate synthetase</fullName>
        <shortName evidence="1">AMPSase</shortName>
        <shortName evidence="1">AdSS</shortName>
        <ecNumber evidence="1">6.3.4.4</ecNumber>
    </recommendedName>
    <alternativeName>
        <fullName evidence="1">IMP--aspartate ligase</fullName>
    </alternativeName>
</protein>
<evidence type="ECO:0000255" key="1">
    <source>
        <dbReference type="HAMAP-Rule" id="MF_00011"/>
    </source>
</evidence>
<comment type="function">
    <text evidence="1">Plays an important role in the de novo pathway of purine nucleotide biosynthesis. Catalyzes the first committed step in the biosynthesis of AMP from IMP.</text>
</comment>
<comment type="catalytic activity">
    <reaction evidence="1">
        <text>IMP + L-aspartate + GTP = N(6)-(1,2-dicarboxyethyl)-AMP + GDP + phosphate + 2 H(+)</text>
        <dbReference type="Rhea" id="RHEA:15753"/>
        <dbReference type="ChEBI" id="CHEBI:15378"/>
        <dbReference type="ChEBI" id="CHEBI:29991"/>
        <dbReference type="ChEBI" id="CHEBI:37565"/>
        <dbReference type="ChEBI" id="CHEBI:43474"/>
        <dbReference type="ChEBI" id="CHEBI:57567"/>
        <dbReference type="ChEBI" id="CHEBI:58053"/>
        <dbReference type="ChEBI" id="CHEBI:58189"/>
        <dbReference type="EC" id="6.3.4.4"/>
    </reaction>
</comment>
<comment type="cofactor">
    <cofactor evidence="1">
        <name>Mg(2+)</name>
        <dbReference type="ChEBI" id="CHEBI:18420"/>
    </cofactor>
    <text evidence="1">Binds 1 Mg(2+) ion per subunit.</text>
</comment>
<comment type="pathway">
    <text evidence="1">Purine metabolism; AMP biosynthesis via de novo pathway; AMP from IMP: step 1/2.</text>
</comment>
<comment type="subunit">
    <text evidence="1">Homodimer.</text>
</comment>
<comment type="subcellular location">
    <subcellularLocation>
        <location evidence="1">Cytoplasm</location>
    </subcellularLocation>
</comment>
<comment type="similarity">
    <text evidence="1">Belongs to the adenylosuccinate synthetase family.</text>
</comment>